<reference key="1">
    <citation type="submission" date="2009-02" db="EMBL/GenBank/DDBJ databases">
        <title>Vibrio splendidus str. LGP32 complete genome.</title>
        <authorList>
            <person name="Mazel D."/>
            <person name="Le Roux F."/>
        </authorList>
    </citation>
    <scope>NUCLEOTIDE SEQUENCE [LARGE SCALE GENOMIC DNA]</scope>
    <source>
        <strain>LGP32</strain>
    </source>
</reference>
<comment type="function">
    <text evidence="1">Catalyzes the phosphorylation of the hydroxyl group of 4-methyl-5-beta-hydroxyethylthiazole (THZ).</text>
</comment>
<comment type="catalytic activity">
    <reaction evidence="1">
        <text>5-(2-hydroxyethyl)-4-methylthiazole + ATP = 4-methyl-5-(2-phosphooxyethyl)-thiazole + ADP + H(+)</text>
        <dbReference type="Rhea" id="RHEA:24212"/>
        <dbReference type="ChEBI" id="CHEBI:15378"/>
        <dbReference type="ChEBI" id="CHEBI:17957"/>
        <dbReference type="ChEBI" id="CHEBI:30616"/>
        <dbReference type="ChEBI" id="CHEBI:58296"/>
        <dbReference type="ChEBI" id="CHEBI:456216"/>
        <dbReference type="EC" id="2.7.1.50"/>
    </reaction>
</comment>
<comment type="cofactor">
    <cofactor evidence="1">
        <name>Mg(2+)</name>
        <dbReference type="ChEBI" id="CHEBI:18420"/>
    </cofactor>
</comment>
<comment type="pathway">
    <text evidence="1">Cofactor biosynthesis; thiamine diphosphate biosynthesis; 4-methyl-5-(2-phosphoethyl)-thiazole from 5-(2-hydroxyethyl)-4-methylthiazole: step 1/1.</text>
</comment>
<comment type="similarity">
    <text evidence="1">Belongs to the Thz kinase family.</text>
</comment>
<comment type="sequence caution" evidence="2">
    <conflict type="erroneous initiation">
        <sequence resource="EMBL-CDS" id="CAV26969"/>
    </conflict>
</comment>
<proteinExistence type="inferred from homology"/>
<evidence type="ECO:0000255" key="1">
    <source>
        <dbReference type="HAMAP-Rule" id="MF_00228"/>
    </source>
</evidence>
<evidence type="ECO:0000305" key="2"/>
<name>THIM_VIBA3</name>
<protein>
    <recommendedName>
        <fullName evidence="1">Hydroxyethylthiazole kinase</fullName>
        <ecNumber evidence="1">2.7.1.50</ecNumber>
    </recommendedName>
    <alternativeName>
        <fullName evidence="1">4-methyl-5-beta-hydroxyethylthiazole kinase</fullName>
        <shortName evidence="1">TH kinase</shortName>
        <shortName evidence="1">Thz kinase</shortName>
    </alternativeName>
</protein>
<organism>
    <name type="scientific">Vibrio atlanticus (strain LGP32)</name>
    <name type="common">Vibrio splendidus (strain Mel32)</name>
    <dbReference type="NCBI Taxonomy" id="575788"/>
    <lineage>
        <taxon>Bacteria</taxon>
        <taxon>Pseudomonadati</taxon>
        <taxon>Pseudomonadota</taxon>
        <taxon>Gammaproteobacteria</taxon>
        <taxon>Vibrionales</taxon>
        <taxon>Vibrionaceae</taxon>
        <taxon>Vibrio</taxon>
    </lineage>
</organism>
<keyword id="KW-0067">ATP-binding</keyword>
<keyword id="KW-0418">Kinase</keyword>
<keyword id="KW-0460">Magnesium</keyword>
<keyword id="KW-0479">Metal-binding</keyword>
<keyword id="KW-0547">Nucleotide-binding</keyword>
<keyword id="KW-0784">Thiamine biosynthesis</keyword>
<keyword id="KW-0808">Transferase</keyword>
<sequence length="261" mass="27369">MLTEQIIQSLRAVREQKPLVVNITNYVVMNNTANALLAIGASPIMAHSKQELAEMMSFSGALVINIGTLDSVWTPRMCFAVEQANANNKVVVLDPVGCGASTLRTETSREIARLADKLIIRGNASEIIALAGEQAQSKGVDALDSSDAALGAAQCLVAEYGANVVISGETDYVVTKDSVVTLNNGHPMMPYVTGMGCTLTALTGAFAAVGDESGLAAAAVLGVVGEISAESSRGPGSLQMNLLDELYQLDEETLIQRLKVQ</sequence>
<dbReference type="EC" id="2.7.1.50" evidence="1"/>
<dbReference type="EMBL" id="FM954973">
    <property type="protein sequence ID" value="CAV26969.1"/>
    <property type="status" value="ALT_INIT"/>
    <property type="molecule type" value="Genomic_DNA"/>
</dbReference>
<dbReference type="SMR" id="B7VS66"/>
<dbReference type="STRING" id="575788.VS_II1085"/>
<dbReference type="KEGG" id="vsp:VS_II1085"/>
<dbReference type="PATRIC" id="fig|575788.5.peg.1025"/>
<dbReference type="eggNOG" id="COG2145">
    <property type="taxonomic scope" value="Bacteria"/>
</dbReference>
<dbReference type="HOGENOM" id="CLU_019943_0_1_6"/>
<dbReference type="UniPathway" id="UPA00060">
    <property type="reaction ID" value="UER00139"/>
</dbReference>
<dbReference type="Proteomes" id="UP000009100">
    <property type="component" value="Chromosome 2"/>
</dbReference>
<dbReference type="GO" id="GO:0005524">
    <property type="term" value="F:ATP binding"/>
    <property type="evidence" value="ECO:0007669"/>
    <property type="project" value="UniProtKB-UniRule"/>
</dbReference>
<dbReference type="GO" id="GO:0004417">
    <property type="term" value="F:hydroxyethylthiazole kinase activity"/>
    <property type="evidence" value="ECO:0007669"/>
    <property type="project" value="UniProtKB-UniRule"/>
</dbReference>
<dbReference type="GO" id="GO:0000287">
    <property type="term" value="F:magnesium ion binding"/>
    <property type="evidence" value="ECO:0007669"/>
    <property type="project" value="UniProtKB-UniRule"/>
</dbReference>
<dbReference type="GO" id="GO:0009228">
    <property type="term" value="P:thiamine biosynthetic process"/>
    <property type="evidence" value="ECO:0007669"/>
    <property type="project" value="UniProtKB-KW"/>
</dbReference>
<dbReference type="GO" id="GO:0009229">
    <property type="term" value="P:thiamine diphosphate biosynthetic process"/>
    <property type="evidence" value="ECO:0007669"/>
    <property type="project" value="UniProtKB-UniRule"/>
</dbReference>
<dbReference type="CDD" id="cd01170">
    <property type="entry name" value="THZ_kinase"/>
    <property type="match status" value="1"/>
</dbReference>
<dbReference type="Gene3D" id="3.40.1190.20">
    <property type="match status" value="1"/>
</dbReference>
<dbReference type="HAMAP" id="MF_00228">
    <property type="entry name" value="Thz_kinase"/>
    <property type="match status" value="1"/>
</dbReference>
<dbReference type="InterPro" id="IPR000417">
    <property type="entry name" value="Hyethyz_kinase"/>
</dbReference>
<dbReference type="InterPro" id="IPR029056">
    <property type="entry name" value="Ribokinase-like"/>
</dbReference>
<dbReference type="NCBIfam" id="NF006830">
    <property type="entry name" value="PRK09355.1"/>
    <property type="match status" value="1"/>
</dbReference>
<dbReference type="Pfam" id="PF02110">
    <property type="entry name" value="HK"/>
    <property type="match status" value="1"/>
</dbReference>
<dbReference type="PIRSF" id="PIRSF000513">
    <property type="entry name" value="Thz_kinase"/>
    <property type="match status" value="1"/>
</dbReference>
<dbReference type="PRINTS" id="PR01099">
    <property type="entry name" value="HYETHTZKNASE"/>
</dbReference>
<dbReference type="SUPFAM" id="SSF53613">
    <property type="entry name" value="Ribokinase-like"/>
    <property type="match status" value="1"/>
</dbReference>
<feature type="chain" id="PRO_0000383911" description="Hydroxyethylthiazole kinase">
    <location>
        <begin position="1"/>
        <end position="261"/>
    </location>
</feature>
<feature type="binding site" evidence="1">
    <location>
        <position position="45"/>
    </location>
    <ligand>
        <name>substrate</name>
    </ligand>
</feature>
<feature type="binding site" evidence="1">
    <location>
        <position position="121"/>
    </location>
    <ligand>
        <name>ATP</name>
        <dbReference type="ChEBI" id="CHEBI:30616"/>
    </ligand>
</feature>
<feature type="binding site" evidence="1">
    <location>
        <position position="167"/>
    </location>
    <ligand>
        <name>ATP</name>
        <dbReference type="ChEBI" id="CHEBI:30616"/>
    </ligand>
</feature>
<feature type="binding site" evidence="1">
    <location>
        <position position="194"/>
    </location>
    <ligand>
        <name>substrate</name>
    </ligand>
</feature>
<gene>
    <name evidence="1" type="primary">thiM</name>
    <name type="ordered locus">VS_II1085</name>
</gene>
<accession>B7VS66</accession>